<feature type="chain" id="PRO_0000330201" description="Histone H2A.Z-specific chaperone chz1">
    <location>
        <begin position="1"/>
        <end position="122"/>
    </location>
</feature>
<feature type="region of interest" description="Disordered" evidence="2">
    <location>
        <begin position="1"/>
        <end position="122"/>
    </location>
</feature>
<feature type="compositionally biased region" description="Low complexity" evidence="2">
    <location>
        <begin position="12"/>
        <end position="21"/>
    </location>
</feature>
<feature type="compositionally biased region" description="Basic and acidic residues" evidence="2">
    <location>
        <begin position="22"/>
        <end position="38"/>
    </location>
</feature>
<feature type="compositionally biased region" description="Acidic residues" evidence="2">
    <location>
        <begin position="39"/>
        <end position="63"/>
    </location>
</feature>
<feature type="compositionally biased region" description="Acidic residues" evidence="2">
    <location>
        <begin position="97"/>
        <end position="122"/>
    </location>
</feature>
<accession>A2QPM6</accession>
<sequence length="122" mass="13263">MGDNNQATTGFDPAANAPDAAAWDKGKGKATDPTQDMRMDDDESDESEAEEMIDDDDDEDNDTLEPISSDNIISGGRRTRGKTIDFQAAAESLKDDGMDEDDDEDDDYVGAGDDDEDNKMQD</sequence>
<organism>
    <name type="scientific">Aspergillus niger (strain ATCC MYA-4892 / CBS 513.88 / FGSC A1513)</name>
    <dbReference type="NCBI Taxonomy" id="425011"/>
    <lineage>
        <taxon>Eukaryota</taxon>
        <taxon>Fungi</taxon>
        <taxon>Dikarya</taxon>
        <taxon>Ascomycota</taxon>
        <taxon>Pezizomycotina</taxon>
        <taxon>Eurotiomycetes</taxon>
        <taxon>Eurotiomycetidae</taxon>
        <taxon>Eurotiales</taxon>
        <taxon>Aspergillaceae</taxon>
        <taxon>Aspergillus</taxon>
        <taxon>Aspergillus subgen. Circumdati</taxon>
    </lineage>
</organism>
<keyword id="KW-0143">Chaperone</keyword>
<keyword id="KW-0539">Nucleus</keyword>
<keyword id="KW-1185">Reference proteome</keyword>
<gene>
    <name type="primary">chz1</name>
    <name type="ORF">An07g09970</name>
</gene>
<proteinExistence type="inferred from homology"/>
<evidence type="ECO:0000250" key="1"/>
<evidence type="ECO:0000256" key="2">
    <source>
        <dbReference type="SAM" id="MobiDB-lite"/>
    </source>
</evidence>
<evidence type="ECO:0000305" key="3"/>
<comment type="function">
    <text evidence="1">Forms a chaperone-bound H2A.Z-H2B complex that acts as a source for SWR1 complex-dependent H2A to H2A.Z histone replacement in chromatin.</text>
</comment>
<comment type="subunit">
    <text evidence="1">Forms a heterotrimer with H2A.Z-H2B, stabilizing the association of the histone dimer. Also, with a lower affinity, forms a heterotrimer with H2A-H2B (By similarity).</text>
</comment>
<comment type="subcellular location">
    <subcellularLocation>
        <location evidence="1">Nucleus</location>
    </subcellularLocation>
</comment>
<comment type="similarity">
    <text evidence="3">Belongs to the CHZ1 family.</text>
</comment>
<protein>
    <recommendedName>
        <fullName>Histone H2A.Z-specific chaperone chz1</fullName>
    </recommendedName>
</protein>
<name>CHZ1_ASPNC</name>
<reference key="1">
    <citation type="journal article" date="2007" name="Nat. Biotechnol.">
        <title>Genome sequencing and analysis of the versatile cell factory Aspergillus niger CBS 513.88.</title>
        <authorList>
            <person name="Pel H.J."/>
            <person name="de Winde J.H."/>
            <person name="Archer D.B."/>
            <person name="Dyer P.S."/>
            <person name="Hofmann G."/>
            <person name="Schaap P.J."/>
            <person name="Turner G."/>
            <person name="de Vries R.P."/>
            <person name="Albang R."/>
            <person name="Albermann K."/>
            <person name="Andersen M.R."/>
            <person name="Bendtsen J.D."/>
            <person name="Benen J.A.E."/>
            <person name="van den Berg M."/>
            <person name="Breestraat S."/>
            <person name="Caddick M.X."/>
            <person name="Contreras R."/>
            <person name="Cornell M."/>
            <person name="Coutinho P.M."/>
            <person name="Danchin E.G.J."/>
            <person name="Debets A.J.M."/>
            <person name="Dekker P."/>
            <person name="van Dijck P.W.M."/>
            <person name="van Dijk A."/>
            <person name="Dijkhuizen L."/>
            <person name="Driessen A.J.M."/>
            <person name="d'Enfert C."/>
            <person name="Geysens S."/>
            <person name="Goosen C."/>
            <person name="Groot G.S.P."/>
            <person name="de Groot P.W.J."/>
            <person name="Guillemette T."/>
            <person name="Henrissat B."/>
            <person name="Herweijer M."/>
            <person name="van den Hombergh J.P.T.W."/>
            <person name="van den Hondel C.A.M.J.J."/>
            <person name="van der Heijden R.T.J.M."/>
            <person name="van der Kaaij R.M."/>
            <person name="Klis F.M."/>
            <person name="Kools H.J."/>
            <person name="Kubicek C.P."/>
            <person name="van Kuyk P.A."/>
            <person name="Lauber J."/>
            <person name="Lu X."/>
            <person name="van der Maarel M.J.E.C."/>
            <person name="Meulenberg R."/>
            <person name="Menke H."/>
            <person name="Mortimer M.A."/>
            <person name="Nielsen J."/>
            <person name="Oliver S.G."/>
            <person name="Olsthoorn M."/>
            <person name="Pal K."/>
            <person name="van Peij N.N.M.E."/>
            <person name="Ram A.F.J."/>
            <person name="Rinas U."/>
            <person name="Roubos J.A."/>
            <person name="Sagt C.M.J."/>
            <person name="Schmoll M."/>
            <person name="Sun J."/>
            <person name="Ussery D."/>
            <person name="Varga J."/>
            <person name="Vervecken W."/>
            <person name="van de Vondervoort P.J.J."/>
            <person name="Wedler H."/>
            <person name="Woesten H.A.B."/>
            <person name="Zeng A.-P."/>
            <person name="van Ooyen A.J.J."/>
            <person name="Visser J."/>
            <person name="Stam H."/>
        </authorList>
    </citation>
    <scope>NUCLEOTIDE SEQUENCE [LARGE SCALE GENOMIC DNA]</scope>
    <source>
        <strain>ATCC MYA-4892 / CBS 513.88 / FGSC A1513</strain>
    </source>
</reference>
<dbReference type="EMBL" id="AM270155">
    <property type="protein sequence ID" value="CAK45126.1"/>
    <property type="molecule type" value="Genomic_DNA"/>
</dbReference>
<dbReference type="RefSeq" id="XP_001392072.2">
    <property type="nucleotide sequence ID" value="XM_001392035.2"/>
</dbReference>
<dbReference type="EnsemblFungi" id="CAK45126">
    <property type="protein sequence ID" value="CAK45126"/>
    <property type="gene ID" value="An07g09970"/>
</dbReference>
<dbReference type="GeneID" id="4982266"/>
<dbReference type="KEGG" id="ang:An07g09970"/>
<dbReference type="VEuPathDB" id="FungiDB:An07g09970"/>
<dbReference type="HOGENOM" id="CLU_130004_1_1_1"/>
<dbReference type="Proteomes" id="UP000006706">
    <property type="component" value="Chromosome 4L"/>
</dbReference>
<dbReference type="GO" id="GO:0005634">
    <property type="term" value="C:nucleus"/>
    <property type="evidence" value="ECO:0007669"/>
    <property type="project" value="UniProtKB-SubCell"/>
</dbReference>
<dbReference type="InterPro" id="IPR019098">
    <property type="entry name" value="Histone_chaperone_domain_CHZ"/>
</dbReference>
<dbReference type="Pfam" id="PF09649">
    <property type="entry name" value="CHZ"/>
    <property type="match status" value="1"/>
</dbReference>
<dbReference type="SMART" id="SM01082">
    <property type="entry name" value="CHZ"/>
    <property type="match status" value="1"/>
</dbReference>